<sequence length="413" mass="47552">MKCSWREGNKIQLLENGEQYYPAVFKAIGEAQERIILETFIWFEDDVGKQLHAALLAAAQRGVKAEVLLDGYGSPDLSDEFVNELTAAGVVFRYYDPRPRLFGMRTNVFRRMHRKIVVIDARIAFIGGLNYSAEHMSSYGPEAKQDYAVRLEGPIVEDILQFELENLPGQSAARRWWRRHHKAEENRQPGEAQVLLVWRDNEEHRDDIERHYLKMLTQARREVIIANAYFFPGYRFLHALRKAARRGVRIKLIIQGEPDMPIVRVGARLLYNYLVKGGVQVFEYRRRPLHGKVALMDDHWATVGSSNLDPLSLSLNLEANVIIHDRNFNQTLRDNLNGIIAADCQQVDETMLPKRTWWNLTKSVLAFHFLRHFPALVGWLPAHTPRLAQVGPPAQPTMETQDRVETENTGVKP</sequence>
<proteinExistence type="inferred from homology"/>
<feature type="chain" id="PRO_0000201285" description="Cardiolipin synthase B">
    <location>
        <begin position="1"/>
        <end position="413"/>
    </location>
</feature>
<feature type="domain" description="PLD phosphodiesterase 1" evidence="1">
    <location>
        <begin position="108"/>
        <end position="135"/>
    </location>
</feature>
<feature type="domain" description="PLD phosphodiesterase 2" evidence="1">
    <location>
        <begin position="285"/>
        <end position="312"/>
    </location>
</feature>
<feature type="region of interest" description="Disordered" evidence="2">
    <location>
        <begin position="390"/>
        <end position="413"/>
    </location>
</feature>
<feature type="active site" evidence="1">
    <location>
        <position position="113"/>
    </location>
</feature>
<feature type="active site" evidence="1">
    <location>
        <position position="115"/>
    </location>
</feature>
<feature type="active site" evidence="1">
    <location>
        <position position="120"/>
    </location>
</feature>
<feature type="active site" evidence="1">
    <location>
        <position position="290"/>
    </location>
</feature>
<feature type="active site" evidence="1">
    <location>
        <position position="292"/>
    </location>
</feature>
<feature type="active site" evidence="1">
    <location>
        <position position="297"/>
    </location>
</feature>
<protein>
    <recommendedName>
        <fullName evidence="1">Cardiolipin synthase B</fullName>
        <shortName evidence="1">CL synthase</shortName>
        <ecNumber evidence="1">2.7.8.-</ecNumber>
    </recommendedName>
</protein>
<organism>
    <name type="scientific">Escherichia coli O6:H1 (strain CFT073 / ATCC 700928 / UPEC)</name>
    <dbReference type="NCBI Taxonomy" id="199310"/>
    <lineage>
        <taxon>Bacteria</taxon>
        <taxon>Pseudomonadati</taxon>
        <taxon>Pseudomonadota</taxon>
        <taxon>Gammaproteobacteria</taxon>
        <taxon>Enterobacterales</taxon>
        <taxon>Enterobacteriaceae</taxon>
        <taxon>Escherichia</taxon>
    </lineage>
</organism>
<accession>Q8FJN9</accession>
<evidence type="ECO:0000255" key="1">
    <source>
        <dbReference type="HAMAP-Rule" id="MF_01917"/>
    </source>
</evidence>
<evidence type="ECO:0000256" key="2">
    <source>
        <dbReference type="SAM" id="MobiDB-lite"/>
    </source>
</evidence>
<comment type="function">
    <text evidence="1">Catalyzes the phosphatidyl group transfer from one phosphatidylglycerol molecule to another to form cardiolipin (CL) (diphosphatidylglycerol) and glycerol.</text>
</comment>
<comment type="catalytic activity">
    <reaction evidence="1">
        <text>2 a 1,2-diacyl-sn-glycero-3-phospho-(1'-sn-glycerol) = a cardiolipin + glycerol</text>
        <dbReference type="Rhea" id="RHEA:31451"/>
        <dbReference type="ChEBI" id="CHEBI:17754"/>
        <dbReference type="ChEBI" id="CHEBI:62237"/>
        <dbReference type="ChEBI" id="CHEBI:64716"/>
    </reaction>
</comment>
<comment type="subcellular location">
    <subcellularLocation>
        <location evidence="1">Cell membrane</location>
        <topology evidence="1">Peripheral membrane protein</topology>
    </subcellularLocation>
</comment>
<comment type="similarity">
    <text evidence="1">Belongs to the phospholipase D family. Cardiolipin synthase subfamily. ClsB sub-subfamily.</text>
</comment>
<dbReference type="EC" id="2.7.8.-" evidence="1"/>
<dbReference type="EMBL" id="AE014075">
    <property type="protein sequence ID" value="AAN79345.1"/>
    <property type="molecule type" value="Genomic_DNA"/>
</dbReference>
<dbReference type="RefSeq" id="WP_000650340.1">
    <property type="nucleotide sequence ID" value="NZ_CP051263.1"/>
</dbReference>
<dbReference type="SMR" id="Q8FJN9"/>
<dbReference type="STRING" id="199310.c0872"/>
<dbReference type="KEGG" id="ecc:c0872"/>
<dbReference type="eggNOG" id="COG1502">
    <property type="taxonomic scope" value="Bacteria"/>
</dbReference>
<dbReference type="HOGENOM" id="CLU_038053_0_0_6"/>
<dbReference type="BioCyc" id="ECOL199310:C0872-MONOMER"/>
<dbReference type="Proteomes" id="UP000001410">
    <property type="component" value="Chromosome"/>
</dbReference>
<dbReference type="GO" id="GO:0005886">
    <property type="term" value="C:plasma membrane"/>
    <property type="evidence" value="ECO:0007669"/>
    <property type="project" value="UniProtKB-SubCell"/>
</dbReference>
<dbReference type="GO" id="GO:0008808">
    <property type="term" value="F:cardiolipin synthase activity"/>
    <property type="evidence" value="ECO:0007669"/>
    <property type="project" value="InterPro"/>
</dbReference>
<dbReference type="GO" id="GO:0032049">
    <property type="term" value="P:cardiolipin biosynthetic process"/>
    <property type="evidence" value="ECO:0007669"/>
    <property type="project" value="InterPro"/>
</dbReference>
<dbReference type="CDD" id="cd09110">
    <property type="entry name" value="PLDc_CLS_1"/>
    <property type="match status" value="1"/>
</dbReference>
<dbReference type="CDD" id="cd09159">
    <property type="entry name" value="PLDc_ybhO_like_2"/>
    <property type="match status" value="1"/>
</dbReference>
<dbReference type="FunFam" id="3.30.870.10:FF:000015">
    <property type="entry name" value="Cardiolipin synthase B"/>
    <property type="match status" value="1"/>
</dbReference>
<dbReference type="FunFam" id="3.30.870.10:FF:000016">
    <property type="entry name" value="Cardiolipin synthase B"/>
    <property type="match status" value="1"/>
</dbReference>
<dbReference type="Gene3D" id="3.30.870.10">
    <property type="entry name" value="Endonuclease Chain A"/>
    <property type="match status" value="2"/>
</dbReference>
<dbReference type="HAMAP" id="MF_01917">
    <property type="entry name" value="Cardiolipin_synth_ClsB"/>
    <property type="match status" value="1"/>
</dbReference>
<dbReference type="InterPro" id="IPR030872">
    <property type="entry name" value="Cardiolipin_synth_ClsB"/>
</dbReference>
<dbReference type="InterPro" id="IPR025202">
    <property type="entry name" value="PLD-like_dom"/>
</dbReference>
<dbReference type="InterPro" id="IPR001736">
    <property type="entry name" value="PLipase_D/transphosphatidylase"/>
</dbReference>
<dbReference type="NCBIfam" id="NF008427">
    <property type="entry name" value="PRK11263.1"/>
    <property type="match status" value="1"/>
</dbReference>
<dbReference type="PANTHER" id="PTHR21248">
    <property type="entry name" value="CARDIOLIPIN SYNTHASE"/>
    <property type="match status" value="1"/>
</dbReference>
<dbReference type="PANTHER" id="PTHR21248:SF23">
    <property type="entry name" value="CARDIOLIPIN SYNTHASE B"/>
    <property type="match status" value="1"/>
</dbReference>
<dbReference type="Pfam" id="PF13091">
    <property type="entry name" value="PLDc_2"/>
    <property type="match status" value="2"/>
</dbReference>
<dbReference type="SMART" id="SM00155">
    <property type="entry name" value="PLDc"/>
    <property type="match status" value="2"/>
</dbReference>
<dbReference type="SUPFAM" id="SSF56024">
    <property type="entry name" value="Phospholipase D/nuclease"/>
    <property type="match status" value="2"/>
</dbReference>
<dbReference type="PROSITE" id="PS50035">
    <property type="entry name" value="PLD"/>
    <property type="match status" value="2"/>
</dbReference>
<keyword id="KW-1003">Cell membrane</keyword>
<keyword id="KW-0444">Lipid biosynthesis</keyword>
<keyword id="KW-0443">Lipid metabolism</keyword>
<keyword id="KW-0472">Membrane</keyword>
<keyword id="KW-0594">Phospholipid biosynthesis</keyword>
<keyword id="KW-1208">Phospholipid metabolism</keyword>
<keyword id="KW-1185">Reference proteome</keyword>
<keyword id="KW-0677">Repeat</keyword>
<keyword id="KW-0808">Transferase</keyword>
<name>CLSB_ECOL6</name>
<gene>
    <name evidence="1" type="primary">clsB</name>
    <name type="synonym">ybhO</name>
    <name type="ordered locus">c0872</name>
</gene>
<reference key="1">
    <citation type="journal article" date="2002" name="Proc. Natl. Acad. Sci. U.S.A.">
        <title>Extensive mosaic structure revealed by the complete genome sequence of uropathogenic Escherichia coli.</title>
        <authorList>
            <person name="Welch R.A."/>
            <person name="Burland V."/>
            <person name="Plunkett G. III"/>
            <person name="Redford P."/>
            <person name="Roesch P."/>
            <person name="Rasko D."/>
            <person name="Buckles E.L."/>
            <person name="Liou S.-R."/>
            <person name="Boutin A."/>
            <person name="Hackett J."/>
            <person name="Stroud D."/>
            <person name="Mayhew G.F."/>
            <person name="Rose D.J."/>
            <person name="Zhou S."/>
            <person name="Schwartz D.C."/>
            <person name="Perna N.T."/>
            <person name="Mobley H.L.T."/>
            <person name="Donnenberg M.S."/>
            <person name="Blattner F.R."/>
        </authorList>
    </citation>
    <scope>NUCLEOTIDE SEQUENCE [LARGE SCALE GENOMIC DNA]</scope>
    <source>
        <strain>CFT073 / ATCC 700928 / UPEC</strain>
    </source>
</reference>